<accession>B1L0A0</accession>
<sequence>MRAVVQRVISSKVEVDGKVIGSIGKGLNVLLGISKEDTEEDIKYLKEKIINLRIFEDENEKLNKSLLDIGGDIIIVSQFTLYGDCRKGRRPSFIEALGGEEAYILYNKFIESIKKEVNNVATGEFGADMKVYIENDGPVTILLDSKKTF</sequence>
<comment type="function">
    <text evidence="1">An aminoacyl-tRNA editing enzyme that deacylates mischarged D-aminoacyl-tRNAs. Also deacylates mischarged glycyl-tRNA(Ala), protecting cells against glycine mischarging by AlaRS. Acts via tRNA-based rather than protein-based catalysis; rejects L-amino acids rather than detecting D-amino acids in the active site. By recycling D-aminoacyl-tRNA to D-amino acids and free tRNA molecules, this enzyme counteracts the toxicity associated with the formation of D-aminoacyl-tRNA entities in vivo and helps enforce protein L-homochirality.</text>
</comment>
<comment type="catalytic activity">
    <reaction evidence="1">
        <text>glycyl-tRNA(Ala) + H2O = tRNA(Ala) + glycine + H(+)</text>
        <dbReference type="Rhea" id="RHEA:53744"/>
        <dbReference type="Rhea" id="RHEA-COMP:9657"/>
        <dbReference type="Rhea" id="RHEA-COMP:13640"/>
        <dbReference type="ChEBI" id="CHEBI:15377"/>
        <dbReference type="ChEBI" id="CHEBI:15378"/>
        <dbReference type="ChEBI" id="CHEBI:57305"/>
        <dbReference type="ChEBI" id="CHEBI:78442"/>
        <dbReference type="ChEBI" id="CHEBI:78522"/>
        <dbReference type="EC" id="3.1.1.96"/>
    </reaction>
</comment>
<comment type="catalytic activity">
    <reaction evidence="1">
        <text>a D-aminoacyl-tRNA + H2O = a tRNA + a D-alpha-amino acid + H(+)</text>
        <dbReference type="Rhea" id="RHEA:13953"/>
        <dbReference type="Rhea" id="RHEA-COMP:10123"/>
        <dbReference type="Rhea" id="RHEA-COMP:10124"/>
        <dbReference type="ChEBI" id="CHEBI:15377"/>
        <dbReference type="ChEBI" id="CHEBI:15378"/>
        <dbReference type="ChEBI" id="CHEBI:59871"/>
        <dbReference type="ChEBI" id="CHEBI:78442"/>
        <dbReference type="ChEBI" id="CHEBI:79333"/>
        <dbReference type="EC" id="3.1.1.96"/>
    </reaction>
</comment>
<comment type="subunit">
    <text evidence="1">Homodimer.</text>
</comment>
<comment type="subcellular location">
    <subcellularLocation>
        <location evidence="1">Cytoplasm</location>
    </subcellularLocation>
</comment>
<comment type="domain">
    <text evidence="1">A Gly-cisPro motif from one monomer fits into the active site of the other monomer to allow specific chiral rejection of L-amino acids.</text>
</comment>
<comment type="similarity">
    <text evidence="1">Belongs to the DTD family.</text>
</comment>
<evidence type="ECO:0000255" key="1">
    <source>
        <dbReference type="HAMAP-Rule" id="MF_00518"/>
    </source>
</evidence>
<protein>
    <recommendedName>
        <fullName evidence="1">D-aminoacyl-tRNA deacylase</fullName>
        <shortName evidence="1">DTD</shortName>
        <ecNumber evidence="1">3.1.1.96</ecNumber>
    </recommendedName>
    <alternativeName>
        <fullName evidence="1">Gly-tRNA(Ala) deacylase</fullName>
    </alternativeName>
</protein>
<dbReference type="EC" id="3.1.1.96" evidence="1"/>
<dbReference type="EMBL" id="CP000962">
    <property type="protein sequence ID" value="ACA56704.1"/>
    <property type="molecule type" value="Genomic_DNA"/>
</dbReference>
<dbReference type="RefSeq" id="WP_012344539.1">
    <property type="nucleotide sequence ID" value="NC_010520.1"/>
</dbReference>
<dbReference type="SMR" id="B1L0A0"/>
<dbReference type="KEGG" id="cbl:CLK_2451"/>
<dbReference type="HOGENOM" id="CLU_076901_1_0_9"/>
<dbReference type="GO" id="GO:0005737">
    <property type="term" value="C:cytoplasm"/>
    <property type="evidence" value="ECO:0007669"/>
    <property type="project" value="UniProtKB-SubCell"/>
</dbReference>
<dbReference type="GO" id="GO:0051500">
    <property type="term" value="F:D-tyrosyl-tRNA(Tyr) deacylase activity"/>
    <property type="evidence" value="ECO:0007669"/>
    <property type="project" value="TreeGrafter"/>
</dbReference>
<dbReference type="GO" id="GO:0106026">
    <property type="term" value="F:Gly-tRNA(Ala) deacylase activity"/>
    <property type="evidence" value="ECO:0007669"/>
    <property type="project" value="UniProtKB-UniRule"/>
</dbReference>
<dbReference type="GO" id="GO:0043908">
    <property type="term" value="F:Ser(Gly)-tRNA(Ala) hydrolase activity"/>
    <property type="evidence" value="ECO:0007669"/>
    <property type="project" value="UniProtKB-UniRule"/>
</dbReference>
<dbReference type="GO" id="GO:0000049">
    <property type="term" value="F:tRNA binding"/>
    <property type="evidence" value="ECO:0007669"/>
    <property type="project" value="UniProtKB-UniRule"/>
</dbReference>
<dbReference type="GO" id="GO:0019478">
    <property type="term" value="P:D-amino acid catabolic process"/>
    <property type="evidence" value="ECO:0007669"/>
    <property type="project" value="UniProtKB-UniRule"/>
</dbReference>
<dbReference type="CDD" id="cd00563">
    <property type="entry name" value="Dtyr_deacylase"/>
    <property type="match status" value="1"/>
</dbReference>
<dbReference type="FunFam" id="3.50.80.10:FF:000001">
    <property type="entry name" value="D-aminoacyl-tRNA deacylase"/>
    <property type="match status" value="1"/>
</dbReference>
<dbReference type="Gene3D" id="3.50.80.10">
    <property type="entry name" value="D-tyrosyl-tRNA(Tyr) deacylase"/>
    <property type="match status" value="1"/>
</dbReference>
<dbReference type="HAMAP" id="MF_00518">
    <property type="entry name" value="Deacylase_Dtd"/>
    <property type="match status" value="1"/>
</dbReference>
<dbReference type="InterPro" id="IPR003732">
    <property type="entry name" value="Daa-tRNA_deacyls_DTD"/>
</dbReference>
<dbReference type="InterPro" id="IPR023509">
    <property type="entry name" value="DTD-like_sf"/>
</dbReference>
<dbReference type="NCBIfam" id="TIGR00256">
    <property type="entry name" value="D-aminoacyl-tRNA deacylase"/>
    <property type="match status" value="1"/>
</dbReference>
<dbReference type="PANTHER" id="PTHR10472:SF5">
    <property type="entry name" value="D-AMINOACYL-TRNA DEACYLASE 1"/>
    <property type="match status" value="1"/>
</dbReference>
<dbReference type="PANTHER" id="PTHR10472">
    <property type="entry name" value="D-TYROSYL-TRNA TYR DEACYLASE"/>
    <property type="match status" value="1"/>
</dbReference>
<dbReference type="Pfam" id="PF02580">
    <property type="entry name" value="Tyr_Deacylase"/>
    <property type="match status" value="1"/>
</dbReference>
<dbReference type="SUPFAM" id="SSF69500">
    <property type="entry name" value="DTD-like"/>
    <property type="match status" value="1"/>
</dbReference>
<gene>
    <name evidence="1" type="primary">dtd</name>
    <name type="ordered locus">CLK_2451</name>
</gene>
<organism>
    <name type="scientific">Clostridium botulinum (strain Loch Maree / Type A3)</name>
    <dbReference type="NCBI Taxonomy" id="498214"/>
    <lineage>
        <taxon>Bacteria</taxon>
        <taxon>Bacillati</taxon>
        <taxon>Bacillota</taxon>
        <taxon>Clostridia</taxon>
        <taxon>Eubacteriales</taxon>
        <taxon>Clostridiaceae</taxon>
        <taxon>Clostridium</taxon>
    </lineage>
</organism>
<proteinExistence type="inferred from homology"/>
<reference key="1">
    <citation type="journal article" date="2007" name="PLoS ONE">
        <title>Analysis of the neurotoxin complex genes in Clostridium botulinum A1-A4 and B1 strains: BoNT/A3, /Ba4 and /B1 clusters are located within plasmids.</title>
        <authorList>
            <person name="Smith T.J."/>
            <person name="Hill K.K."/>
            <person name="Foley B.T."/>
            <person name="Detter J.C."/>
            <person name="Munk A.C."/>
            <person name="Bruce D.C."/>
            <person name="Doggett N.A."/>
            <person name="Smith L.A."/>
            <person name="Marks J.D."/>
            <person name="Xie G."/>
            <person name="Brettin T.S."/>
        </authorList>
    </citation>
    <scope>NUCLEOTIDE SEQUENCE [LARGE SCALE GENOMIC DNA]</scope>
    <source>
        <strain>Loch Maree / Type A3</strain>
    </source>
</reference>
<keyword id="KW-0963">Cytoplasm</keyword>
<keyword id="KW-0378">Hydrolase</keyword>
<keyword id="KW-0694">RNA-binding</keyword>
<keyword id="KW-0820">tRNA-binding</keyword>
<feature type="chain" id="PRO_1000127510" description="D-aminoacyl-tRNA deacylase">
    <location>
        <begin position="1"/>
        <end position="149"/>
    </location>
</feature>
<feature type="short sequence motif" description="Gly-cisPro motif, important for rejection of L-amino acids" evidence="1">
    <location>
        <begin position="137"/>
        <end position="138"/>
    </location>
</feature>
<name>DTD_CLOBM</name>